<feature type="chain" id="PRO_0000242417" description="Large ribosomal subunit protein uL4">
    <location>
        <begin position="1"/>
        <end position="200"/>
    </location>
</feature>
<feature type="region of interest" description="Disordered" evidence="2">
    <location>
        <begin position="38"/>
        <end position="68"/>
    </location>
</feature>
<feature type="compositionally biased region" description="Basic residues" evidence="2">
    <location>
        <begin position="54"/>
        <end position="65"/>
    </location>
</feature>
<dbReference type="EMBL" id="CP000094">
    <property type="protein sequence ID" value="ABA76815.1"/>
    <property type="molecule type" value="Genomic_DNA"/>
</dbReference>
<dbReference type="RefSeq" id="WP_003228735.1">
    <property type="nucleotide sequence ID" value="NC_007492.2"/>
</dbReference>
<dbReference type="SMR" id="Q3K5Y9"/>
<dbReference type="GeneID" id="93491413"/>
<dbReference type="KEGG" id="pfo:Pfl01_5078"/>
<dbReference type="eggNOG" id="COG0088">
    <property type="taxonomic scope" value="Bacteria"/>
</dbReference>
<dbReference type="HOGENOM" id="CLU_041575_5_2_6"/>
<dbReference type="Proteomes" id="UP000002704">
    <property type="component" value="Chromosome"/>
</dbReference>
<dbReference type="GO" id="GO:1990904">
    <property type="term" value="C:ribonucleoprotein complex"/>
    <property type="evidence" value="ECO:0007669"/>
    <property type="project" value="UniProtKB-KW"/>
</dbReference>
<dbReference type="GO" id="GO:0005840">
    <property type="term" value="C:ribosome"/>
    <property type="evidence" value="ECO:0007669"/>
    <property type="project" value="UniProtKB-KW"/>
</dbReference>
<dbReference type="GO" id="GO:0019843">
    <property type="term" value="F:rRNA binding"/>
    <property type="evidence" value="ECO:0007669"/>
    <property type="project" value="UniProtKB-UniRule"/>
</dbReference>
<dbReference type="GO" id="GO:0003735">
    <property type="term" value="F:structural constituent of ribosome"/>
    <property type="evidence" value="ECO:0007669"/>
    <property type="project" value="InterPro"/>
</dbReference>
<dbReference type="GO" id="GO:0006412">
    <property type="term" value="P:translation"/>
    <property type="evidence" value="ECO:0007669"/>
    <property type="project" value="UniProtKB-UniRule"/>
</dbReference>
<dbReference type="FunFam" id="3.40.1370.10:FF:000001">
    <property type="entry name" value="50S ribosomal protein L4"/>
    <property type="match status" value="1"/>
</dbReference>
<dbReference type="Gene3D" id="3.40.1370.10">
    <property type="match status" value="1"/>
</dbReference>
<dbReference type="HAMAP" id="MF_01328_B">
    <property type="entry name" value="Ribosomal_uL4_B"/>
    <property type="match status" value="1"/>
</dbReference>
<dbReference type="InterPro" id="IPR002136">
    <property type="entry name" value="Ribosomal_uL4"/>
</dbReference>
<dbReference type="InterPro" id="IPR013005">
    <property type="entry name" value="Ribosomal_uL4-like"/>
</dbReference>
<dbReference type="InterPro" id="IPR023574">
    <property type="entry name" value="Ribosomal_uL4_dom_sf"/>
</dbReference>
<dbReference type="NCBIfam" id="TIGR03953">
    <property type="entry name" value="rplD_bact"/>
    <property type="match status" value="1"/>
</dbReference>
<dbReference type="PANTHER" id="PTHR10746">
    <property type="entry name" value="50S RIBOSOMAL PROTEIN L4"/>
    <property type="match status" value="1"/>
</dbReference>
<dbReference type="PANTHER" id="PTHR10746:SF6">
    <property type="entry name" value="LARGE RIBOSOMAL SUBUNIT PROTEIN UL4M"/>
    <property type="match status" value="1"/>
</dbReference>
<dbReference type="Pfam" id="PF00573">
    <property type="entry name" value="Ribosomal_L4"/>
    <property type="match status" value="1"/>
</dbReference>
<dbReference type="SUPFAM" id="SSF52166">
    <property type="entry name" value="Ribosomal protein L4"/>
    <property type="match status" value="1"/>
</dbReference>
<accession>Q3K5Y9</accession>
<reference key="1">
    <citation type="journal article" date="2009" name="Genome Biol.">
        <title>Genomic and genetic analyses of diversity and plant interactions of Pseudomonas fluorescens.</title>
        <authorList>
            <person name="Silby M.W."/>
            <person name="Cerdeno-Tarraga A.M."/>
            <person name="Vernikos G.S."/>
            <person name="Giddens S.R."/>
            <person name="Jackson R.W."/>
            <person name="Preston G.M."/>
            <person name="Zhang X.-X."/>
            <person name="Moon C.D."/>
            <person name="Gehrig S.M."/>
            <person name="Godfrey S.A.C."/>
            <person name="Knight C.G."/>
            <person name="Malone J.G."/>
            <person name="Robinson Z."/>
            <person name="Spiers A.J."/>
            <person name="Harris S."/>
            <person name="Challis G.L."/>
            <person name="Yaxley A.M."/>
            <person name="Harris D."/>
            <person name="Seeger K."/>
            <person name="Murphy L."/>
            <person name="Rutter S."/>
            <person name="Squares R."/>
            <person name="Quail M.A."/>
            <person name="Saunders E."/>
            <person name="Mavromatis K."/>
            <person name="Brettin T.S."/>
            <person name="Bentley S.D."/>
            <person name="Hothersall J."/>
            <person name="Stephens E."/>
            <person name="Thomas C.M."/>
            <person name="Parkhill J."/>
            <person name="Levy S.B."/>
            <person name="Rainey P.B."/>
            <person name="Thomson N.R."/>
        </authorList>
    </citation>
    <scope>NUCLEOTIDE SEQUENCE [LARGE SCALE GENOMIC DNA]</scope>
    <source>
        <strain>Pf0-1</strain>
    </source>
</reference>
<protein>
    <recommendedName>
        <fullName evidence="1">Large ribosomal subunit protein uL4</fullName>
    </recommendedName>
    <alternativeName>
        <fullName evidence="3">50S ribosomal protein L4</fullName>
    </alternativeName>
</protein>
<proteinExistence type="inferred from homology"/>
<evidence type="ECO:0000255" key="1">
    <source>
        <dbReference type="HAMAP-Rule" id="MF_01328"/>
    </source>
</evidence>
<evidence type="ECO:0000256" key="2">
    <source>
        <dbReference type="SAM" id="MobiDB-lite"/>
    </source>
</evidence>
<evidence type="ECO:0000305" key="3"/>
<name>RL4_PSEPF</name>
<gene>
    <name evidence="1" type="primary">rplD</name>
    <name type="ordered locus">Pfl01_5078</name>
</gene>
<sequence>MQLNVNDAQAIEVSELTFGGEFNETLVHQAVVAYMAGGRQGSKQQKTRSDVRGGGKRPWRQKGTGRARAGTIRSPIWRGGGTTFAARPQDHSQKLNKKMYRAAMRSILAELVRTDRLVVVQDFAVETPKTKDLLGKLNNMSLTDVLIVSDAVDQNLYLAARNLPHVDVRDVQGSDPVSLIAYDKVLITVSAVKKFEELLG</sequence>
<keyword id="KW-0687">Ribonucleoprotein</keyword>
<keyword id="KW-0689">Ribosomal protein</keyword>
<keyword id="KW-0694">RNA-binding</keyword>
<keyword id="KW-0699">rRNA-binding</keyword>
<comment type="function">
    <text evidence="1">One of the primary rRNA binding proteins, this protein initially binds near the 5'-end of the 23S rRNA. It is important during the early stages of 50S assembly. It makes multiple contacts with different domains of the 23S rRNA in the assembled 50S subunit and ribosome.</text>
</comment>
<comment type="function">
    <text evidence="1">Forms part of the polypeptide exit tunnel.</text>
</comment>
<comment type="subunit">
    <text evidence="1">Part of the 50S ribosomal subunit.</text>
</comment>
<comment type="similarity">
    <text evidence="1">Belongs to the universal ribosomal protein uL4 family.</text>
</comment>
<organism>
    <name type="scientific">Pseudomonas fluorescens (strain Pf0-1)</name>
    <dbReference type="NCBI Taxonomy" id="205922"/>
    <lineage>
        <taxon>Bacteria</taxon>
        <taxon>Pseudomonadati</taxon>
        <taxon>Pseudomonadota</taxon>
        <taxon>Gammaproteobacteria</taxon>
        <taxon>Pseudomonadales</taxon>
        <taxon>Pseudomonadaceae</taxon>
        <taxon>Pseudomonas</taxon>
    </lineage>
</organism>